<geneLocation type="mitochondrion"/>
<reference key="1">
    <citation type="journal article" date="1992" name="Mol. Phylogenet. Evol.">
        <title>Evolution of the mitochondrial cytochrome oxidase II gene among 10 orders of insects.</title>
        <authorList>
            <person name="Liu H."/>
            <person name="Beckenbach A.T."/>
        </authorList>
    </citation>
    <scope>NUCLEOTIDE SEQUENCE [GENOMIC DNA]</scope>
</reference>
<keyword id="KW-0186">Copper</keyword>
<keyword id="KW-0249">Electron transport</keyword>
<keyword id="KW-0460">Magnesium</keyword>
<keyword id="KW-0472">Membrane</keyword>
<keyword id="KW-0479">Metal-binding</keyword>
<keyword id="KW-0496">Mitochondrion</keyword>
<keyword id="KW-0999">Mitochondrion inner membrane</keyword>
<keyword id="KW-0679">Respiratory chain</keyword>
<keyword id="KW-1278">Translocase</keyword>
<keyword id="KW-0812">Transmembrane</keyword>
<keyword id="KW-1133">Transmembrane helix</keyword>
<keyword id="KW-0813">Transport</keyword>
<feature type="chain" id="PRO_0000183691" description="Cytochrome c oxidase subunit 2">
    <location>
        <begin position="1"/>
        <end position="227"/>
    </location>
</feature>
<feature type="topological domain" description="Mitochondrial intermembrane" evidence="2">
    <location>
        <begin position="1"/>
        <end position="26"/>
    </location>
</feature>
<feature type="transmembrane region" description="Helical" evidence="2">
    <location>
        <begin position="27"/>
        <end position="48"/>
    </location>
</feature>
<feature type="topological domain" description="Mitochondrial matrix" evidence="2">
    <location>
        <begin position="49"/>
        <end position="62"/>
    </location>
</feature>
<feature type="transmembrane region" description="Helical" evidence="2">
    <location>
        <begin position="63"/>
        <end position="82"/>
    </location>
</feature>
<feature type="topological domain" description="Mitochondrial intermembrane" evidence="2">
    <location>
        <begin position="83"/>
        <end position="227"/>
    </location>
</feature>
<feature type="binding site" evidence="1">
    <location>
        <position position="161"/>
    </location>
    <ligand>
        <name>Cu cation</name>
        <dbReference type="ChEBI" id="CHEBI:23378"/>
        <label>A1</label>
    </ligand>
</feature>
<feature type="binding site" evidence="1">
    <location>
        <position position="196"/>
    </location>
    <ligand>
        <name>Cu cation</name>
        <dbReference type="ChEBI" id="CHEBI:23378"/>
        <label>A1</label>
    </ligand>
</feature>
<feature type="binding site" evidence="1">
    <location>
        <position position="196"/>
    </location>
    <ligand>
        <name>Cu cation</name>
        <dbReference type="ChEBI" id="CHEBI:23378"/>
        <label>A2</label>
    </ligand>
</feature>
<feature type="binding site" evidence="1">
    <location>
        <position position="198"/>
    </location>
    <ligand>
        <name>Cu cation</name>
        <dbReference type="ChEBI" id="CHEBI:23378"/>
        <label>A2</label>
    </ligand>
</feature>
<feature type="binding site" evidence="1">
    <location>
        <position position="198"/>
    </location>
    <ligand>
        <name>Mg(2+)</name>
        <dbReference type="ChEBI" id="CHEBI:18420"/>
        <note>ligand shared with subunit 1</note>
    </ligand>
</feature>
<feature type="binding site" evidence="1">
    <location>
        <position position="200"/>
    </location>
    <ligand>
        <name>Cu cation</name>
        <dbReference type="ChEBI" id="CHEBI:23378"/>
        <label>A1</label>
    </ligand>
</feature>
<feature type="binding site" evidence="1">
    <location>
        <position position="200"/>
    </location>
    <ligand>
        <name>Cu cation</name>
        <dbReference type="ChEBI" id="CHEBI:23378"/>
        <label>A2</label>
    </ligand>
</feature>
<feature type="binding site" evidence="1">
    <location>
        <position position="204"/>
    </location>
    <ligand>
        <name>Cu cation</name>
        <dbReference type="ChEBI" id="CHEBI:23378"/>
        <label>A2</label>
    </ligand>
</feature>
<feature type="binding site" evidence="1">
    <location>
        <position position="207"/>
    </location>
    <ligand>
        <name>Cu cation</name>
        <dbReference type="ChEBI" id="CHEBI:23378"/>
        <label>A1</label>
    </ligand>
</feature>
<dbReference type="EC" id="7.1.1.9"/>
<dbReference type="EMBL" id="M83970">
    <property type="protein sequence ID" value="AAA32070.2"/>
    <property type="molecule type" value="Genomic_DNA"/>
</dbReference>
<dbReference type="PIR" id="D45170">
    <property type="entry name" value="D45170"/>
</dbReference>
<dbReference type="SMR" id="P29879"/>
<dbReference type="GO" id="GO:0005743">
    <property type="term" value="C:mitochondrial inner membrane"/>
    <property type="evidence" value="ECO:0007669"/>
    <property type="project" value="UniProtKB-SubCell"/>
</dbReference>
<dbReference type="GO" id="GO:0005507">
    <property type="term" value="F:copper ion binding"/>
    <property type="evidence" value="ECO:0007669"/>
    <property type="project" value="InterPro"/>
</dbReference>
<dbReference type="GO" id="GO:0004129">
    <property type="term" value="F:cytochrome-c oxidase activity"/>
    <property type="evidence" value="ECO:0007669"/>
    <property type="project" value="UniProtKB-EC"/>
</dbReference>
<dbReference type="GO" id="GO:0042773">
    <property type="term" value="P:ATP synthesis coupled electron transport"/>
    <property type="evidence" value="ECO:0007669"/>
    <property type="project" value="TreeGrafter"/>
</dbReference>
<dbReference type="CDD" id="cd13912">
    <property type="entry name" value="CcO_II_C"/>
    <property type="match status" value="1"/>
</dbReference>
<dbReference type="FunFam" id="1.10.287.90:FF:000001">
    <property type="entry name" value="Cytochrome c oxidase subunit 2"/>
    <property type="match status" value="1"/>
</dbReference>
<dbReference type="FunFam" id="2.60.40.420:FF:000001">
    <property type="entry name" value="Cytochrome c oxidase subunit 2"/>
    <property type="match status" value="1"/>
</dbReference>
<dbReference type="Gene3D" id="1.10.287.90">
    <property type="match status" value="1"/>
</dbReference>
<dbReference type="Gene3D" id="2.60.40.420">
    <property type="entry name" value="Cupredoxins - blue copper proteins"/>
    <property type="match status" value="1"/>
</dbReference>
<dbReference type="InterPro" id="IPR045187">
    <property type="entry name" value="CcO_II"/>
</dbReference>
<dbReference type="InterPro" id="IPR002429">
    <property type="entry name" value="CcO_II-like_C"/>
</dbReference>
<dbReference type="InterPro" id="IPR034210">
    <property type="entry name" value="CcO_II_C"/>
</dbReference>
<dbReference type="InterPro" id="IPR001505">
    <property type="entry name" value="Copper_CuA"/>
</dbReference>
<dbReference type="InterPro" id="IPR008972">
    <property type="entry name" value="Cupredoxin"/>
</dbReference>
<dbReference type="InterPro" id="IPR011759">
    <property type="entry name" value="Cyt_c_oxidase_su2_TM_dom"/>
</dbReference>
<dbReference type="InterPro" id="IPR036257">
    <property type="entry name" value="Cyt_c_oxidase_su2_TM_sf"/>
</dbReference>
<dbReference type="PANTHER" id="PTHR22888:SF9">
    <property type="entry name" value="CYTOCHROME C OXIDASE SUBUNIT 2"/>
    <property type="match status" value="1"/>
</dbReference>
<dbReference type="PANTHER" id="PTHR22888">
    <property type="entry name" value="CYTOCHROME C OXIDASE, SUBUNIT II"/>
    <property type="match status" value="1"/>
</dbReference>
<dbReference type="Pfam" id="PF00116">
    <property type="entry name" value="COX2"/>
    <property type="match status" value="1"/>
</dbReference>
<dbReference type="Pfam" id="PF02790">
    <property type="entry name" value="COX2_TM"/>
    <property type="match status" value="1"/>
</dbReference>
<dbReference type="PRINTS" id="PR01166">
    <property type="entry name" value="CYCOXIDASEII"/>
</dbReference>
<dbReference type="SUPFAM" id="SSF49503">
    <property type="entry name" value="Cupredoxins"/>
    <property type="match status" value="1"/>
</dbReference>
<dbReference type="SUPFAM" id="SSF81464">
    <property type="entry name" value="Cytochrome c oxidase subunit II-like, transmembrane region"/>
    <property type="match status" value="1"/>
</dbReference>
<dbReference type="PROSITE" id="PS00078">
    <property type="entry name" value="COX2"/>
    <property type="match status" value="1"/>
</dbReference>
<dbReference type="PROSITE" id="PS50857">
    <property type="entry name" value="COX2_CUA"/>
    <property type="match status" value="1"/>
</dbReference>
<dbReference type="PROSITE" id="PS50999">
    <property type="entry name" value="COX2_TM"/>
    <property type="match status" value="1"/>
</dbReference>
<evidence type="ECO:0000250" key="1">
    <source>
        <dbReference type="UniProtKB" id="P00410"/>
    </source>
</evidence>
<evidence type="ECO:0000255" key="2"/>
<evidence type="ECO:0000305" key="3"/>
<name>COX2_SITGR</name>
<sequence>MSTWKNLFLQDSASPLMELLMCFHDHAMLILILITIMVSQMLLSMLFNKLSHRYLLEGQLIETIWTIIPAIILILIALPSLRLLYILDEINNPQLLIKIIGHQWYWSYEYSDYKNIEFDSYMIPTKELNSFNFRLLEVDNRTPIPYKTQIRILVTSADVIHSWTIPSMSIKIDGTPGRLNQANLIANRSSIFFGQCSEICGANHSFMPIVLESITPNLFLNWVISKA</sequence>
<proteinExistence type="inferred from homology"/>
<organism>
    <name type="scientific">Sitophilus granarius</name>
    <name type="common">Granary weevil</name>
    <name type="synonym">Curculio granarius</name>
    <dbReference type="NCBI Taxonomy" id="7046"/>
    <lineage>
        <taxon>Eukaryota</taxon>
        <taxon>Metazoa</taxon>
        <taxon>Ecdysozoa</taxon>
        <taxon>Arthropoda</taxon>
        <taxon>Hexapoda</taxon>
        <taxon>Insecta</taxon>
        <taxon>Pterygota</taxon>
        <taxon>Neoptera</taxon>
        <taxon>Endopterygota</taxon>
        <taxon>Coleoptera</taxon>
        <taxon>Polyphaga</taxon>
        <taxon>Cucujiformia</taxon>
        <taxon>Curculionidae</taxon>
        <taxon>Dryophthorinae</taxon>
        <taxon>Sitophilus</taxon>
    </lineage>
</organism>
<protein>
    <recommendedName>
        <fullName>Cytochrome c oxidase subunit 2</fullName>
        <ecNumber>7.1.1.9</ecNumber>
    </recommendedName>
    <alternativeName>
        <fullName>Cytochrome c oxidase polypeptide II</fullName>
    </alternativeName>
</protein>
<accession>P29879</accession>
<gene>
    <name type="primary">COII</name>
</gene>
<comment type="function">
    <text evidence="1">Component of the cytochrome c oxidase, the last enzyme in the mitochondrial electron transport chain which drives oxidative phosphorylation. The respiratory chain contains 3 multisubunit complexes succinate dehydrogenase (complex II, CII), ubiquinol-cytochrome c oxidoreductase (cytochrome b-c1 complex, complex III, CIII) and cytochrome c oxidase (complex IV, CIV), that cooperate to transfer electrons derived from NADH and succinate to molecular oxygen, creating an electrochemical gradient over the inner membrane that drives transmembrane transport and the ATP synthase. Cytochrome c oxidase is the component of the respiratory chain that catalyzes the reduction of oxygen to water. Electrons originating from reduced cytochrome c in the intermembrane space (IMS) are transferred via the dinuclear copper A center (CU(A)) of subunit 2 and heme A of subunit 1 to the active site in subunit 1, a binuclear center (BNC) formed by heme A3 and copper B (CU(B)). The BNC reduces molecular oxygen to 2 water molecules using 4 electrons from cytochrome c in the IMS and 4 protons from the mitochondrial matrix.</text>
</comment>
<comment type="catalytic activity">
    <reaction evidence="1">
        <text>4 Fe(II)-[cytochrome c] + O2 + 8 H(+)(in) = 4 Fe(III)-[cytochrome c] + 2 H2O + 4 H(+)(out)</text>
        <dbReference type="Rhea" id="RHEA:11436"/>
        <dbReference type="Rhea" id="RHEA-COMP:10350"/>
        <dbReference type="Rhea" id="RHEA-COMP:14399"/>
        <dbReference type="ChEBI" id="CHEBI:15377"/>
        <dbReference type="ChEBI" id="CHEBI:15378"/>
        <dbReference type="ChEBI" id="CHEBI:15379"/>
        <dbReference type="ChEBI" id="CHEBI:29033"/>
        <dbReference type="ChEBI" id="CHEBI:29034"/>
        <dbReference type="EC" id="7.1.1.9"/>
    </reaction>
    <physiologicalReaction direction="left-to-right" evidence="1">
        <dbReference type="Rhea" id="RHEA:11437"/>
    </physiologicalReaction>
</comment>
<comment type="cofactor">
    <cofactor evidence="1">
        <name>Cu cation</name>
        <dbReference type="ChEBI" id="CHEBI:23378"/>
    </cofactor>
    <text evidence="1">Binds a dinuclear copper A center per subunit.</text>
</comment>
<comment type="subunit">
    <text evidence="1">Component of the cytochrome c oxidase (complex IV, CIV), a multisubunit enzyme composed of a catalytic core of 3 subunits and several supernumerary subunits. The complex exists as a monomer or a dimer and forms supercomplexes (SCs) in the inner mitochondrial membrane with ubiquinol-cytochrome c oxidoreductase (cytochrome b-c1 complex, complex III, CIII).</text>
</comment>
<comment type="subcellular location">
    <subcellularLocation>
        <location evidence="1">Mitochondrion inner membrane</location>
        <topology evidence="1">Multi-pass membrane protein</topology>
    </subcellularLocation>
</comment>
<comment type="similarity">
    <text evidence="3">Belongs to the cytochrome c oxidase subunit 2 family.</text>
</comment>